<sequence length="193" mass="20684">MTELALILVSTVLVNNFVLVKFLGLCPFMGVSRQLETAMGMALATTFVLTLSAVCSYLAYEYLLAPLGVEYLRTITFIMVIAVVVQFTEMAVRKTSPLLHQVLGIYLPLITTNCAVLGVALLNLQEQNSLLQSAVYGFGAAAGFSLVLVLFAALRERLEVADVPLPFRGASVALVTAGILSMGFMGFAGLVRL</sequence>
<proteinExistence type="inferred from homology"/>
<protein>
    <recommendedName>
        <fullName evidence="1">Ion-translocating oxidoreductase complex subunit A</fullName>
        <ecNumber evidence="1">7.-.-.-</ecNumber>
    </recommendedName>
    <alternativeName>
        <fullName evidence="1">Rnf electron transport complex subunit A</fullName>
    </alternativeName>
</protein>
<accession>Q0AAG7</accession>
<reference key="1">
    <citation type="submission" date="2006-08" db="EMBL/GenBank/DDBJ databases">
        <title>Complete sequence of Alkalilimnicola ehrilichei MLHE-1.</title>
        <authorList>
            <person name="Copeland A."/>
            <person name="Lucas S."/>
            <person name="Lapidus A."/>
            <person name="Barry K."/>
            <person name="Detter J.C."/>
            <person name="Glavina del Rio T."/>
            <person name="Hammon N."/>
            <person name="Israni S."/>
            <person name="Dalin E."/>
            <person name="Tice H."/>
            <person name="Pitluck S."/>
            <person name="Sims D."/>
            <person name="Brettin T."/>
            <person name="Bruce D."/>
            <person name="Han C."/>
            <person name="Tapia R."/>
            <person name="Gilna P."/>
            <person name="Schmutz J."/>
            <person name="Larimer F."/>
            <person name="Land M."/>
            <person name="Hauser L."/>
            <person name="Kyrpides N."/>
            <person name="Mikhailova N."/>
            <person name="Oremland R.S."/>
            <person name="Hoeft S.E."/>
            <person name="Switzer-Blum J."/>
            <person name="Kulp T."/>
            <person name="King G."/>
            <person name="Tabita R."/>
            <person name="Witte B."/>
            <person name="Santini J.M."/>
            <person name="Basu P."/>
            <person name="Hollibaugh J.T."/>
            <person name="Xie G."/>
            <person name="Stolz J.F."/>
            <person name="Richardson P."/>
        </authorList>
    </citation>
    <scope>NUCLEOTIDE SEQUENCE [LARGE SCALE GENOMIC DNA]</scope>
    <source>
        <strain>ATCC BAA-1101 / DSM 17681 / MLHE-1</strain>
    </source>
</reference>
<keyword id="KW-0997">Cell inner membrane</keyword>
<keyword id="KW-1003">Cell membrane</keyword>
<keyword id="KW-0249">Electron transport</keyword>
<keyword id="KW-0472">Membrane</keyword>
<keyword id="KW-1185">Reference proteome</keyword>
<keyword id="KW-1278">Translocase</keyword>
<keyword id="KW-0812">Transmembrane</keyword>
<keyword id="KW-1133">Transmembrane helix</keyword>
<keyword id="KW-0813">Transport</keyword>
<evidence type="ECO:0000255" key="1">
    <source>
        <dbReference type="HAMAP-Rule" id="MF_00459"/>
    </source>
</evidence>
<dbReference type="EC" id="7.-.-.-" evidence="1"/>
<dbReference type="EMBL" id="CP000453">
    <property type="protein sequence ID" value="ABI56170.1"/>
    <property type="molecule type" value="Genomic_DNA"/>
</dbReference>
<dbReference type="RefSeq" id="WP_011628565.1">
    <property type="nucleotide sequence ID" value="NC_008340.1"/>
</dbReference>
<dbReference type="SMR" id="Q0AAG7"/>
<dbReference type="KEGG" id="aeh:Mlg_0816"/>
<dbReference type="eggNOG" id="COG4657">
    <property type="taxonomic scope" value="Bacteria"/>
</dbReference>
<dbReference type="HOGENOM" id="CLU_095255_1_0_6"/>
<dbReference type="OrthoDB" id="9803631at2"/>
<dbReference type="Proteomes" id="UP000001962">
    <property type="component" value="Chromosome"/>
</dbReference>
<dbReference type="GO" id="GO:0005886">
    <property type="term" value="C:plasma membrane"/>
    <property type="evidence" value="ECO:0007669"/>
    <property type="project" value="UniProtKB-SubCell"/>
</dbReference>
<dbReference type="GO" id="GO:0022900">
    <property type="term" value="P:electron transport chain"/>
    <property type="evidence" value="ECO:0007669"/>
    <property type="project" value="UniProtKB-UniRule"/>
</dbReference>
<dbReference type="HAMAP" id="MF_00459">
    <property type="entry name" value="RsxA_RnfA"/>
    <property type="match status" value="1"/>
</dbReference>
<dbReference type="InterPro" id="IPR011293">
    <property type="entry name" value="Ion_transpt_RnfA/RsxA"/>
</dbReference>
<dbReference type="InterPro" id="IPR003667">
    <property type="entry name" value="NqrDE/RnfAE"/>
</dbReference>
<dbReference type="InterPro" id="IPR050133">
    <property type="entry name" value="NqrDE/RnfAE_oxidrdctase"/>
</dbReference>
<dbReference type="NCBIfam" id="NF003481">
    <property type="entry name" value="PRK05151.1"/>
    <property type="match status" value="1"/>
</dbReference>
<dbReference type="NCBIfam" id="TIGR01943">
    <property type="entry name" value="rnfA"/>
    <property type="match status" value="1"/>
</dbReference>
<dbReference type="PANTHER" id="PTHR30335">
    <property type="entry name" value="INTEGRAL MEMBRANE PROTEIN OF SOXR-REDUCING COMPLEX"/>
    <property type="match status" value="1"/>
</dbReference>
<dbReference type="PANTHER" id="PTHR30335:SF0">
    <property type="entry name" value="ION-TRANSLOCATING OXIDOREDUCTASE COMPLEX SUBUNIT A"/>
    <property type="match status" value="1"/>
</dbReference>
<dbReference type="Pfam" id="PF02508">
    <property type="entry name" value="Rnf-Nqr"/>
    <property type="match status" value="1"/>
</dbReference>
<dbReference type="PIRSF" id="PIRSF006102">
    <property type="entry name" value="NQR_DE"/>
    <property type="match status" value="1"/>
</dbReference>
<gene>
    <name evidence="1" type="primary">rnfA</name>
    <name type="ordered locus">Mlg_0816</name>
</gene>
<comment type="function">
    <text evidence="1">Part of a membrane-bound complex that couples electron transfer with translocation of ions across the membrane.</text>
</comment>
<comment type="subunit">
    <text evidence="1">The complex is composed of six subunits: RnfA, RnfB, RnfC, RnfD, RnfE and RnfG.</text>
</comment>
<comment type="subcellular location">
    <subcellularLocation>
        <location evidence="1">Cell inner membrane</location>
        <topology evidence="1">Multi-pass membrane protein</topology>
    </subcellularLocation>
</comment>
<comment type="similarity">
    <text evidence="1">Belongs to the NqrDE/RnfAE family.</text>
</comment>
<feature type="chain" id="PRO_1000013522" description="Ion-translocating oxidoreductase complex subunit A">
    <location>
        <begin position="1"/>
        <end position="193"/>
    </location>
</feature>
<feature type="transmembrane region" description="Helical" evidence="1">
    <location>
        <begin position="4"/>
        <end position="24"/>
    </location>
</feature>
<feature type="transmembrane region" description="Helical" evidence="1">
    <location>
        <begin position="38"/>
        <end position="58"/>
    </location>
</feature>
<feature type="transmembrane region" description="Helical" evidence="1">
    <location>
        <begin position="65"/>
        <end position="85"/>
    </location>
</feature>
<feature type="transmembrane region" description="Helical" evidence="1">
    <location>
        <begin position="102"/>
        <end position="122"/>
    </location>
</feature>
<feature type="transmembrane region" description="Helical" evidence="1">
    <location>
        <begin position="134"/>
        <end position="154"/>
    </location>
</feature>
<feature type="transmembrane region" description="Helical" evidence="1">
    <location>
        <begin position="171"/>
        <end position="191"/>
    </location>
</feature>
<name>RNFA_ALKEH</name>
<organism>
    <name type="scientific">Alkalilimnicola ehrlichii (strain ATCC BAA-1101 / DSM 17681 / MLHE-1)</name>
    <dbReference type="NCBI Taxonomy" id="187272"/>
    <lineage>
        <taxon>Bacteria</taxon>
        <taxon>Pseudomonadati</taxon>
        <taxon>Pseudomonadota</taxon>
        <taxon>Gammaproteobacteria</taxon>
        <taxon>Chromatiales</taxon>
        <taxon>Ectothiorhodospiraceae</taxon>
        <taxon>Alkalilimnicola</taxon>
    </lineage>
</organism>